<organism>
    <name type="scientific">Philodryas olfersii</name>
    <name type="common">Green snake</name>
    <dbReference type="NCBI Taxonomy" id="120305"/>
    <lineage>
        <taxon>Eukaryota</taxon>
        <taxon>Metazoa</taxon>
        <taxon>Chordata</taxon>
        <taxon>Craniata</taxon>
        <taxon>Vertebrata</taxon>
        <taxon>Euteleostomi</taxon>
        <taxon>Lepidosauria</taxon>
        <taxon>Squamata</taxon>
        <taxon>Bifurcata</taxon>
        <taxon>Unidentata</taxon>
        <taxon>Episquamata</taxon>
        <taxon>Toxicofera</taxon>
        <taxon>Serpentes</taxon>
        <taxon>Colubroidea</taxon>
        <taxon>Dipsadidae</taxon>
        <taxon>Philodryas</taxon>
    </lineage>
</organism>
<proteinExistence type="evidence at transcript level"/>
<comment type="function">
    <text evidence="1">Snake venom natriuretic peptide that has a vasorelaxant activity in rat aortic strips and a diuretic potency in anesthetized rats (By similarity). May act by activating natriuretic receptors (NPR1 and/or NPR2).</text>
</comment>
<comment type="subcellular location">
    <subcellularLocation>
        <location evidence="7">Secreted</location>
    </subcellularLocation>
</comment>
<comment type="tissue specificity">
    <text evidence="7">Expressed by the venom gland.</text>
</comment>
<comment type="similarity">
    <text evidence="4">Belongs to the natriuretic peptide family.</text>
</comment>
<reference evidence="8" key="1">
    <citation type="journal article" date="2006" name="FEBS Lett.">
        <title>Some aspects of the venom proteome of the Colubridae snake Philodryas olfersii revealed from a Duvernoy's (venom) gland transcriptome.</title>
        <authorList>
            <person name="Ching A.T.C."/>
            <person name="Rocha M.M.T."/>
            <person name="Paes Leme A.F."/>
            <person name="Pimenta D.C."/>
            <person name="Furtado M.F.D."/>
            <person name="Serrano S.M.T."/>
            <person name="Ho P.L."/>
            <person name="Junqueira-de-Azevedo I.L.M."/>
        </authorList>
    </citation>
    <scope>NUCLEOTIDE SEQUENCE [MRNA]</scope>
    <source>
        <tissue>Venom gland</tissue>
    </source>
</reference>
<reference key="2">
    <citation type="journal article" date="2006" name="FEBS Lett.">
        <authorList>
            <person name="Ching A.T.C."/>
            <person name="Rocha M.M.T."/>
            <person name="Paes Leme A.F."/>
            <person name="Pimenta D.C."/>
            <person name="Furtado M.F.D."/>
            <person name="Serrano S.M.T."/>
            <person name="Ho P.L."/>
            <person name="Junqueira-de-Azevedo I.L.M."/>
        </authorList>
    </citation>
    <scope>ERRATUM OF PUBMED:16857193</scope>
</reference>
<feature type="signal peptide" evidence="4">
    <location>
        <begin position="1"/>
        <end position="23"/>
    </location>
</feature>
<feature type="propeptide" id="PRO_0000315892" evidence="3">
    <location>
        <begin position="24"/>
        <end position="142"/>
    </location>
</feature>
<feature type="peptide" id="PRO_0000315893" description="C-type natriuretic peptide" evidence="3">
    <location>
        <begin position="143"/>
        <end position="164"/>
    </location>
</feature>
<feature type="region of interest" description="Disordered" evidence="5">
    <location>
        <begin position="24"/>
        <end position="93"/>
    </location>
</feature>
<feature type="region of interest" description="Disordered" evidence="5">
    <location>
        <begin position="115"/>
        <end position="134"/>
    </location>
</feature>
<feature type="compositionally biased region" description="Gly residues" evidence="5">
    <location>
        <begin position="58"/>
        <end position="67"/>
    </location>
</feature>
<feature type="compositionally biased region" description="Low complexity" evidence="5">
    <location>
        <begin position="68"/>
        <end position="93"/>
    </location>
</feature>
<feature type="compositionally biased region" description="Gly residues" evidence="5">
    <location>
        <begin position="121"/>
        <end position="132"/>
    </location>
</feature>
<feature type="disulfide bond" evidence="2">
    <location>
        <begin position="148"/>
        <end position="164"/>
    </location>
</feature>
<dbReference type="EMBL" id="DQ912656">
    <property type="protein sequence ID" value="ABI74693.1"/>
    <property type="molecule type" value="mRNA"/>
</dbReference>
<dbReference type="GO" id="GO:0005576">
    <property type="term" value="C:extracellular region"/>
    <property type="evidence" value="ECO:0007669"/>
    <property type="project" value="UniProtKB-SubCell"/>
</dbReference>
<dbReference type="GO" id="GO:0005179">
    <property type="term" value="F:hormone activity"/>
    <property type="evidence" value="ECO:0007669"/>
    <property type="project" value="InterPro"/>
</dbReference>
<dbReference type="GO" id="GO:0090729">
    <property type="term" value="F:toxin activity"/>
    <property type="evidence" value="ECO:0007669"/>
    <property type="project" value="UniProtKB-KW"/>
</dbReference>
<dbReference type="GO" id="GO:0006182">
    <property type="term" value="P:cGMP biosynthetic process"/>
    <property type="evidence" value="ECO:0007669"/>
    <property type="project" value="TreeGrafter"/>
</dbReference>
<dbReference type="GO" id="GO:0007168">
    <property type="term" value="P:receptor guanylyl cyclase signaling pathway"/>
    <property type="evidence" value="ECO:0007669"/>
    <property type="project" value="TreeGrafter"/>
</dbReference>
<dbReference type="GO" id="GO:0008217">
    <property type="term" value="P:regulation of blood pressure"/>
    <property type="evidence" value="ECO:0007669"/>
    <property type="project" value="UniProtKB-KW"/>
</dbReference>
<dbReference type="GO" id="GO:0042311">
    <property type="term" value="P:vasodilation"/>
    <property type="evidence" value="ECO:0007669"/>
    <property type="project" value="UniProtKB-KW"/>
</dbReference>
<dbReference type="InterPro" id="IPR000663">
    <property type="entry name" value="Natr_peptide"/>
</dbReference>
<dbReference type="InterPro" id="IPR030480">
    <property type="entry name" value="Natr_peptide_CS"/>
</dbReference>
<dbReference type="PANTHER" id="PTHR12167">
    <property type="entry name" value="C-TYPE NATRIURETIC PEPTIDE"/>
    <property type="match status" value="1"/>
</dbReference>
<dbReference type="PANTHER" id="PTHR12167:SF2">
    <property type="entry name" value="C-TYPE NATRIURETIC PEPTIDE"/>
    <property type="match status" value="1"/>
</dbReference>
<dbReference type="Pfam" id="PF00212">
    <property type="entry name" value="ANP"/>
    <property type="match status" value="1"/>
</dbReference>
<dbReference type="PRINTS" id="PR00710">
    <property type="entry name" value="NATPEPTIDES"/>
</dbReference>
<dbReference type="SMART" id="SM00183">
    <property type="entry name" value="NAT_PEP"/>
    <property type="match status" value="1"/>
</dbReference>
<dbReference type="PROSITE" id="PS00263">
    <property type="entry name" value="NATRIURETIC_PEPTIDE"/>
    <property type="match status" value="1"/>
</dbReference>
<sequence length="164" mass="15855">MVASRLAAGGLLLLALLALALDGKPAPPQPLRKAPAGGTTAWRRELTEQPEGASRPAAGGGGGGGRSGSKAANAAPTAPKSKGGAAAAAAAAARLMRDLRPDSKQARAAWGRMVHPEHHAGGGGGGGGGGGASRRLKGVAKKGLGKGCFGLKLDRIGSMSGLGC</sequence>
<keyword id="KW-0165">Cleavage on pair of basic residues</keyword>
<keyword id="KW-1015">Disulfide bond</keyword>
<keyword id="KW-0382">Hypotensive agent</keyword>
<keyword id="KW-0964">Secreted</keyword>
<keyword id="KW-0732">Signal</keyword>
<keyword id="KW-0800">Toxin</keyword>
<keyword id="KW-0838">Vasoactive</keyword>
<keyword id="KW-0840">Vasodilator</keyword>
<evidence type="ECO:0000250" key="1">
    <source>
        <dbReference type="UniProtKB" id="P0C7P5"/>
    </source>
</evidence>
<evidence type="ECO:0000250" key="2">
    <source>
        <dbReference type="UniProtKB" id="P0DMD6"/>
    </source>
</evidence>
<evidence type="ECO:0000250" key="3">
    <source>
        <dbReference type="UniProtKB" id="Q27J49"/>
    </source>
</evidence>
<evidence type="ECO:0000255" key="4"/>
<evidence type="ECO:0000256" key="5">
    <source>
        <dbReference type="SAM" id="MobiDB-lite"/>
    </source>
</evidence>
<evidence type="ECO:0000303" key="6">
    <source>
    </source>
</evidence>
<evidence type="ECO:0000305" key="7">
    <source>
    </source>
</evidence>
<evidence type="ECO:0000312" key="8">
    <source>
        <dbReference type="EMBL" id="ABI74693.1"/>
    </source>
</evidence>
<protein>
    <recommendedName>
        <fullName evidence="6">C-type natriuretic peptide</fullName>
        <shortName evidence="6">CNP</shortName>
    </recommendedName>
</protein>
<name>VNP_PHIOL</name>
<accession>Q09GK2</accession>